<keyword id="KW-0028">Amino-acid biosynthesis</keyword>
<keyword id="KW-0100">Branched-chain amino acid biosynthesis</keyword>
<keyword id="KW-0963">Cytoplasm</keyword>
<keyword id="KW-0432">Leucine biosynthesis</keyword>
<keyword id="KW-0464">Manganese</keyword>
<keyword id="KW-0479">Metal-binding</keyword>
<keyword id="KW-0808">Transferase</keyword>
<reference key="1">
    <citation type="submission" date="2008-02" db="EMBL/GenBank/DDBJ databases">
        <title>Complete sequence of Escherichia coli C str. ATCC 8739.</title>
        <authorList>
            <person name="Copeland A."/>
            <person name="Lucas S."/>
            <person name="Lapidus A."/>
            <person name="Glavina del Rio T."/>
            <person name="Dalin E."/>
            <person name="Tice H."/>
            <person name="Bruce D."/>
            <person name="Goodwin L."/>
            <person name="Pitluck S."/>
            <person name="Kiss H."/>
            <person name="Brettin T."/>
            <person name="Detter J.C."/>
            <person name="Han C."/>
            <person name="Kuske C.R."/>
            <person name="Schmutz J."/>
            <person name="Larimer F."/>
            <person name="Land M."/>
            <person name="Hauser L."/>
            <person name="Kyrpides N."/>
            <person name="Mikhailova N."/>
            <person name="Ingram L."/>
            <person name="Richardson P."/>
        </authorList>
    </citation>
    <scope>NUCLEOTIDE SEQUENCE [LARGE SCALE GENOMIC DNA]</scope>
    <source>
        <strain>ATCC 8739 / DSM 1576 / NBRC 3972 / NCIMB 8545 / WDCM 00012 / Crooks</strain>
    </source>
</reference>
<name>LEU1_ECOLC</name>
<organism>
    <name type="scientific">Escherichia coli (strain ATCC 8739 / DSM 1576 / NBRC 3972 / NCIMB 8545 / WDCM 00012 / Crooks)</name>
    <dbReference type="NCBI Taxonomy" id="481805"/>
    <lineage>
        <taxon>Bacteria</taxon>
        <taxon>Pseudomonadati</taxon>
        <taxon>Pseudomonadota</taxon>
        <taxon>Gammaproteobacteria</taxon>
        <taxon>Enterobacterales</taxon>
        <taxon>Enterobacteriaceae</taxon>
        <taxon>Escherichia</taxon>
    </lineage>
</organism>
<sequence>MSQQVIIFDTTLRDGEQALQASLSVKEKLQIALALERMGVDVMEVGFPVSSPGDFESVQTIARQVKNSRVCALARCVEKDIDVAAESLKVAEAFRIHTFIATSPMHIATKLRSTLDEVIERAIYMVKRARNYTDDVEFSCEDAGRTPIADLARVVEAAINAGATTINIPDTVGYTMPFEFAGIISGLYERVPNIDKAIISVHTHDDLGLAVGNSLAAVHAGARQVEGAMNGIGERAGNCSLEEVIMAIKVRKDILNVHTAINHQEIWRTSQLVSQICNMPIPANKAIVGSGAFAHSSGIHQDGVLKNRENYEIMTPESIGLNQIQLNLTSRSGRAAVKHRMDEMGYKESEYNLDNLYDAFLKLADKKGQVFDYDLEALAFIGKQQEEPEHFRLDYFSVQSGSNDIATAAVKLACGEEVKAEAANGNGPVDAVYQAINRITDYNVELVKYSLTAKGHGKDALGQVDIVANYNGRRFHGVGLATDIVESSAKAMVHVLNNIWRAAEVEKELQRKAQHNENNKETV</sequence>
<comment type="function">
    <text evidence="1">Catalyzes the condensation of the acetyl group of acetyl-CoA with 3-methyl-2-oxobutanoate (2-ketoisovalerate) to form 3-carboxy-3-hydroxy-4-methylpentanoate (2-isopropylmalate).</text>
</comment>
<comment type="catalytic activity">
    <reaction evidence="1">
        <text>3-methyl-2-oxobutanoate + acetyl-CoA + H2O = (2S)-2-isopropylmalate + CoA + H(+)</text>
        <dbReference type="Rhea" id="RHEA:21524"/>
        <dbReference type="ChEBI" id="CHEBI:1178"/>
        <dbReference type="ChEBI" id="CHEBI:11851"/>
        <dbReference type="ChEBI" id="CHEBI:15377"/>
        <dbReference type="ChEBI" id="CHEBI:15378"/>
        <dbReference type="ChEBI" id="CHEBI:57287"/>
        <dbReference type="ChEBI" id="CHEBI:57288"/>
        <dbReference type="EC" id="2.3.3.13"/>
    </reaction>
</comment>
<comment type="cofactor">
    <cofactor evidence="1">
        <name>Mn(2+)</name>
        <dbReference type="ChEBI" id="CHEBI:29035"/>
    </cofactor>
</comment>
<comment type="pathway">
    <text evidence="1">Amino-acid biosynthesis; L-leucine biosynthesis; L-leucine from 3-methyl-2-oxobutanoate: step 1/4.</text>
</comment>
<comment type="subunit">
    <text evidence="1">Homodimer.</text>
</comment>
<comment type="subcellular location">
    <subcellularLocation>
        <location evidence="1">Cytoplasm</location>
    </subcellularLocation>
</comment>
<comment type="similarity">
    <text evidence="1">Belongs to the alpha-IPM synthase/homocitrate synthase family. LeuA type 1 subfamily.</text>
</comment>
<evidence type="ECO:0000255" key="1">
    <source>
        <dbReference type="HAMAP-Rule" id="MF_01025"/>
    </source>
</evidence>
<proteinExistence type="inferred from homology"/>
<accession>B1IRA4</accession>
<feature type="chain" id="PRO_1000149193" description="2-isopropylmalate synthase">
    <location>
        <begin position="1"/>
        <end position="523"/>
    </location>
</feature>
<feature type="domain" description="Pyruvate carboxyltransferase" evidence="1">
    <location>
        <begin position="5"/>
        <end position="267"/>
    </location>
</feature>
<feature type="region of interest" description="Regulatory domain" evidence="1">
    <location>
        <begin position="392"/>
        <end position="523"/>
    </location>
</feature>
<feature type="binding site" evidence="1">
    <location>
        <position position="14"/>
    </location>
    <ligand>
        <name>Mn(2+)</name>
        <dbReference type="ChEBI" id="CHEBI:29035"/>
    </ligand>
</feature>
<feature type="binding site" evidence="1">
    <location>
        <position position="202"/>
    </location>
    <ligand>
        <name>Mn(2+)</name>
        <dbReference type="ChEBI" id="CHEBI:29035"/>
    </ligand>
</feature>
<feature type="binding site" evidence="1">
    <location>
        <position position="204"/>
    </location>
    <ligand>
        <name>Mn(2+)</name>
        <dbReference type="ChEBI" id="CHEBI:29035"/>
    </ligand>
</feature>
<feature type="binding site" evidence="1">
    <location>
        <position position="238"/>
    </location>
    <ligand>
        <name>Mn(2+)</name>
        <dbReference type="ChEBI" id="CHEBI:29035"/>
    </ligand>
</feature>
<dbReference type="EC" id="2.3.3.13" evidence="1"/>
<dbReference type="EMBL" id="CP000946">
    <property type="protein sequence ID" value="ACA79197.1"/>
    <property type="molecule type" value="Genomic_DNA"/>
</dbReference>
<dbReference type="RefSeq" id="WP_000082846.1">
    <property type="nucleotide sequence ID" value="NZ_MTFT01000035.1"/>
</dbReference>
<dbReference type="SMR" id="B1IRA4"/>
<dbReference type="GeneID" id="75202109"/>
<dbReference type="KEGG" id="ecl:EcolC_3583"/>
<dbReference type="HOGENOM" id="CLU_022158_0_1_6"/>
<dbReference type="UniPathway" id="UPA00048">
    <property type="reaction ID" value="UER00070"/>
</dbReference>
<dbReference type="GO" id="GO:0005829">
    <property type="term" value="C:cytosol"/>
    <property type="evidence" value="ECO:0007669"/>
    <property type="project" value="TreeGrafter"/>
</dbReference>
<dbReference type="GO" id="GO:0003852">
    <property type="term" value="F:2-isopropylmalate synthase activity"/>
    <property type="evidence" value="ECO:0007669"/>
    <property type="project" value="UniProtKB-UniRule"/>
</dbReference>
<dbReference type="GO" id="GO:0003985">
    <property type="term" value="F:acetyl-CoA C-acetyltransferase activity"/>
    <property type="evidence" value="ECO:0007669"/>
    <property type="project" value="UniProtKB-UniRule"/>
</dbReference>
<dbReference type="GO" id="GO:0030145">
    <property type="term" value="F:manganese ion binding"/>
    <property type="evidence" value="ECO:0007669"/>
    <property type="project" value="UniProtKB-UniRule"/>
</dbReference>
<dbReference type="GO" id="GO:0009098">
    <property type="term" value="P:L-leucine biosynthetic process"/>
    <property type="evidence" value="ECO:0007669"/>
    <property type="project" value="UniProtKB-UniRule"/>
</dbReference>
<dbReference type="CDD" id="cd07940">
    <property type="entry name" value="DRE_TIM_IPMS"/>
    <property type="match status" value="1"/>
</dbReference>
<dbReference type="FunFam" id="1.10.238.260:FF:000001">
    <property type="entry name" value="2-isopropylmalate synthase"/>
    <property type="match status" value="1"/>
</dbReference>
<dbReference type="FunFam" id="3.20.20.70:FF:000010">
    <property type="entry name" value="2-isopropylmalate synthase"/>
    <property type="match status" value="1"/>
</dbReference>
<dbReference type="FunFam" id="3.30.160.270:FF:000001">
    <property type="entry name" value="2-isopropylmalate synthase"/>
    <property type="match status" value="1"/>
</dbReference>
<dbReference type="Gene3D" id="1.10.238.260">
    <property type="match status" value="1"/>
</dbReference>
<dbReference type="Gene3D" id="3.30.160.270">
    <property type="match status" value="1"/>
</dbReference>
<dbReference type="Gene3D" id="3.20.20.70">
    <property type="entry name" value="Aldolase class I"/>
    <property type="match status" value="1"/>
</dbReference>
<dbReference type="HAMAP" id="MF_01025">
    <property type="entry name" value="LeuA_type1"/>
    <property type="match status" value="1"/>
</dbReference>
<dbReference type="InterPro" id="IPR050073">
    <property type="entry name" value="2-IPM_HCS-like"/>
</dbReference>
<dbReference type="InterPro" id="IPR013709">
    <property type="entry name" value="2-isopropylmalate_synth_dimer"/>
</dbReference>
<dbReference type="InterPro" id="IPR002034">
    <property type="entry name" value="AIPM/Hcit_synth_CS"/>
</dbReference>
<dbReference type="InterPro" id="IPR013785">
    <property type="entry name" value="Aldolase_TIM"/>
</dbReference>
<dbReference type="InterPro" id="IPR054691">
    <property type="entry name" value="LeuA/HCS_post-cat"/>
</dbReference>
<dbReference type="InterPro" id="IPR036230">
    <property type="entry name" value="LeuA_allosteric_dom_sf"/>
</dbReference>
<dbReference type="InterPro" id="IPR005671">
    <property type="entry name" value="LeuA_bact_synth"/>
</dbReference>
<dbReference type="InterPro" id="IPR000891">
    <property type="entry name" value="PYR_CT"/>
</dbReference>
<dbReference type="NCBIfam" id="TIGR00973">
    <property type="entry name" value="leuA_bact"/>
    <property type="match status" value="1"/>
</dbReference>
<dbReference type="NCBIfam" id="NF002084">
    <property type="entry name" value="PRK00915.1-1"/>
    <property type="match status" value="1"/>
</dbReference>
<dbReference type="NCBIfam" id="NF002086">
    <property type="entry name" value="PRK00915.1-3"/>
    <property type="match status" value="1"/>
</dbReference>
<dbReference type="PANTHER" id="PTHR10277:SF9">
    <property type="entry name" value="2-ISOPROPYLMALATE SYNTHASE 1, CHLOROPLASTIC-RELATED"/>
    <property type="match status" value="1"/>
</dbReference>
<dbReference type="PANTHER" id="PTHR10277">
    <property type="entry name" value="HOMOCITRATE SYNTHASE-RELATED"/>
    <property type="match status" value="1"/>
</dbReference>
<dbReference type="Pfam" id="PF22617">
    <property type="entry name" value="HCS_D2"/>
    <property type="match status" value="1"/>
</dbReference>
<dbReference type="Pfam" id="PF00682">
    <property type="entry name" value="HMGL-like"/>
    <property type="match status" value="1"/>
</dbReference>
<dbReference type="Pfam" id="PF08502">
    <property type="entry name" value="LeuA_dimer"/>
    <property type="match status" value="1"/>
</dbReference>
<dbReference type="SMART" id="SM00917">
    <property type="entry name" value="LeuA_dimer"/>
    <property type="match status" value="1"/>
</dbReference>
<dbReference type="SUPFAM" id="SSF110921">
    <property type="entry name" value="2-isopropylmalate synthase LeuA, allosteric (dimerisation) domain"/>
    <property type="match status" value="1"/>
</dbReference>
<dbReference type="SUPFAM" id="SSF51569">
    <property type="entry name" value="Aldolase"/>
    <property type="match status" value="1"/>
</dbReference>
<dbReference type="PROSITE" id="PS00815">
    <property type="entry name" value="AIPM_HOMOCIT_SYNTH_1"/>
    <property type="match status" value="1"/>
</dbReference>
<dbReference type="PROSITE" id="PS00816">
    <property type="entry name" value="AIPM_HOMOCIT_SYNTH_2"/>
    <property type="match status" value="1"/>
</dbReference>
<dbReference type="PROSITE" id="PS50991">
    <property type="entry name" value="PYR_CT"/>
    <property type="match status" value="1"/>
</dbReference>
<gene>
    <name evidence="1" type="primary">leuA</name>
    <name type="ordered locus">EcolC_3583</name>
</gene>
<protein>
    <recommendedName>
        <fullName evidence="1">2-isopropylmalate synthase</fullName>
        <ecNumber evidence="1">2.3.3.13</ecNumber>
    </recommendedName>
    <alternativeName>
        <fullName evidence="1">Alpha-IPM synthase</fullName>
    </alternativeName>
    <alternativeName>
        <fullName evidence="1">Alpha-isopropylmalate synthase</fullName>
    </alternativeName>
</protein>